<organism>
    <name type="scientific">Bacteroides fragilis (strain YCH46)</name>
    <dbReference type="NCBI Taxonomy" id="295405"/>
    <lineage>
        <taxon>Bacteria</taxon>
        <taxon>Pseudomonadati</taxon>
        <taxon>Bacteroidota</taxon>
        <taxon>Bacteroidia</taxon>
        <taxon>Bacteroidales</taxon>
        <taxon>Bacteroidaceae</taxon>
        <taxon>Bacteroides</taxon>
    </lineage>
</organism>
<reference key="1">
    <citation type="journal article" date="2004" name="Proc. Natl. Acad. Sci. U.S.A.">
        <title>Genomic analysis of Bacteroides fragilis reveals extensive DNA inversions regulating cell surface adaptation.</title>
        <authorList>
            <person name="Kuwahara T."/>
            <person name="Yamashita A."/>
            <person name="Hirakawa H."/>
            <person name="Nakayama H."/>
            <person name="Toh H."/>
            <person name="Okada N."/>
            <person name="Kuhara S."/>
            <person name="Hattori M."/>
            <person name="Hayashi T."/>
            <person name="Ohnishi Y."/>
        </authorList>
    </citation>
    <scope>NUCLEOTIDE SEQUENCE [LARGE SCALE GENOMIC DNA]</scope>
    <source>
        <strain>YCH46</strain>
    </source>
</reference>
<proteinExistence type="inferred from homology"/>
<keyword id="KW-0687">Ribonucleoprotein</keyword>
<keyword id="KW-0689">Ribosomal protein</keyword>
<keyword id="KW-0694">RNA-binding</keyword>
<keyword id="KW-0699">rRNA-binding</keyword>
<name>RL21_BACFR</name>
<evidence type="ECO:0000255" key="1">
    <source>
        <dbReference type="HAMAP-Rule" id="MF_01363"/>
    </source>
</evidence>
<evidence type="ECO:0000305" key="2"/>
<comment type="function">
    <text evidence="1">This protein binds to 23S rRNA in the presence of protein L20.</text>
</comment>
<comment type="subunit">
    <text evidence="1">Part of the 50S ribosomal subunit. Contacts protein L20.</text>
</comment>
<comment type="similarity">
    <text evidence="1">Belongs to the bacterial ribosomal protein bL21 family.</text>
</comment>
<gene>
    <name evidence="1" type="primary">rplU</name>
    <name type="ordered locus">BF1010</name>
</gene>
<protein>
    <recommendedName>
        <fullName evidence="1">Large ribosomal subunit protein bL21</fullName>
    </recommendedName>
    <alternativeName>
        <fullName evidence="2">50S ribosomal protein L21</fullName>
    </alternativeName>
</protein>
<dbReference type="EMBL" id="AP006841">
    <property type="protein sequence ID" value="BAD47760.1"/>
    <property type="molecule type" value="Genomic_DNA"/>
</dbReference>
<dbReference type="RefSeq" id="WP_005775748.1">
    <property type="nucleotide sequence ID" value="NZ_UYXF01000020.1"/>
</dbReference>
<dbReference type="RefSeq" id="YP_098294.1">
    <property type="nucleotide sequence ID" value="NC_006347.1"/>
</dbReference>
<dbReference type="SMR" id="Q64XL6"/>
<dbReference type="STRING" id="295405.BF1010"/>
<dbReference type="GeneID" id="93106590"/>
<dbReference type="KEGG" id="bfr:BF1010"/>
<dbReference type="PATRIC" id="fig|295405.11.peg.1008"/>
<dbReference type="HOGENOM" id="CLU_061463_3_2_10"/>
<dbReference type="OrthoDB" id="9813334at2"/>
<dbReference type="Proteomes" id="UP000002197">
    <property type="component" value="Chromosome"/>
</dbReference>
<dbReference type="GO" id="GO:0005737">
    <property type="term" value="C:cytoplasm"/>
    <property type="evidence" value="ECO:0007669"/>
    <property type="project" value="UniProtKB-ARBA"/>
</dbReference>
<dbReference type="GO" id="GO:1990904">
    <property type="term" value="C:ribonucleoprotein complex"/>
    <property type="evidence" value="ECO:0007669"/>
    <property type="project" value="UniProtKB-KW"/>
</dbReference>
<dbReference type="GO" id="GO:0005840">
    <property type="term" value="C:ribosome"/>
    <property type="evidence" value="ECO:0007669"/>
    <property type="project" value="UniProtKB-KW"/>
</dbReference>
<dbReference type="GO" id="GO:0019843">
    <property type="term" value="F:rRNA binding"/>
    <property type="evidence" value="ECO:0007669"/>
    <property type="project" value="UniProtKB-UniRule"/>
</dbReference>
<dbReference type="GO" id="GO:0003735">
    <property type="term" value="F:structural constituent of ribosome"/>
    <property type="evidence" value="ECO:0007669"/>
    <property type="project" value="InterPro"/>
</dbReference>
<dbReference type="GO" id="GO:0006412">
    <property type="term" value="P:translation"/>
    <property type="evidence" value="ECO:0007669"/>
    <property type="project" value="UniProtKB-UniRule"/>
</dbReference>
<dbReference type="HAMAP" id="MF_01363">
    <property type="entry name" value="Ribosomal_bL21"/>
    <property type="match status" value="1"/>
</dbReference>
<dbReference type="InterPro" id="IPR028909">
    <property type="entry name" value="bL21-like"/>
</dbReference>
<dbReference type="InterPro" id="IPR036164">
    <property type="entry name" value="bL21-like_sf"/>
</dbReference>
<dbReference type="InterPro" id="IPR001787">
    <property type="entry name" value="Ribosomal_bL21"/>
</dbReference>
<dbReference type="NCBIfam" id="TIGR00061">
    <property type="entry name" value="L21"/>
    <property type="match status" value="1"/>
</dbReference>
<dbReference type="PANTHER" id="PTHR21349">
    <property type="entry name" value="50S RIBOSOMAL PROTEIN L21"/>
    <property type="match status" value="1"/>
</dbReference>
<dbReference type="PANTHER" id="PTHR21349:SF0">
    <property type="entry name" value="LARGE RIBOSOMAL SUBUNIT PROTEIN BL21M"/>
    <property type="match status" value="1"/>
</dbReference>
<dbReference type="Pfam" id="PF00829">
    <property type="entry name" value="Ribosomal_L21p"/>
    <property type="match status" value="1"/>
</dbReference>
<dbReference type="SUPFAM" id="SSF141091">
    <property type="entry name" value="L21p-like"/>
    <property type="match status" value="1"/>
</dbReference>
<accession>Q64XL6</accession>
<feature type="chain" id="PRO_0000270634" description="Large ribosomal subunit protein bL21">
    <location>
        <begin position="1"/>
        <end position="105"/>
    </location>
</feature>
<sequence>MYAIVEINGQQFKAEAGQKLFVHHIQNAENGATVEFDKVLLVDKDGNVTVGAPTVDGAKVVCQIVSSLVKGDKVLVFHKKRRKGHRKLNGHRQQFTELTITEVVA</sequence>